<name>YHG7_SCHPO</name>
<feature type="signal peptide" evidence="1">
    <location>
        <begin position="1"/>
        <end position="19"/>
    </location>
</feature>
<feature type="chain" id="PRO_0000012130" description="Putative mannan endo-1,6-alpha-mannosidase C1198.07c">
    <location>
        <begin position="20"/>
        <end position="442"/>
    </location>
</feature>
<feature type="topological domain" description="Lumenal" evidence="1">
    <location>
        <begin position="20"/>
        <end position="421"/>
    </location>
</feature>
<feature type="transmembrane region" description="Helical" evidence="1">
    <location>
        <begin position="422"/>
        <end position="442"/>
    </location>
</feature>
<feature type="glycosylation site" description="N-linked (GlcNAc...) asparagine" evidence="1">
    <location>
        <position position="75"/>
    </location>
</feature>
<feature type="glycosylation site" description="N-linked (GlcNAc...) asparagine" evidence="1">
    <location>
        <position position="124"/>
    </location>
</feature>
<feature type="glycosylation site" description="N-linked (GlcNAc...) asparagine" evidence="1">
    <location>
        <position position="193"/>
    </location>
</feature>
<feature type="glycosylation site" description="N-linked (GlcNAc...) asparagine" evidence="1">
    <location>
        <position position="229"/>
    </location>
</feature>
<feature type="glycosylation site" description="N-linked (GlcNAc...) asparagine" evidence="1">
    <location>
        <position position="254"/>
    </location>
</feature>
<feature type="glycosylation site" description="N-linked (GlcNAc...) asparagine" evidence="1">
    <location>
        <position position="257"/>
    </location>
</feature>
<feature type="glycosylation site" description="N-linked (GlcNAc...) asparagine" evidence="1">
    <location>
        <position position="356"/>
    </location>
</feature>
<keyword id="KW-0256">Endoplasmic reticulum</keyword>
<keyword id="KW-0325">Glycoprotein</keyword>
<keyword id="KW-0326">Glycosidase</keyword>
<keyword id="KW-0378">Hydrolase</keyword>
<keyword id="KW-0472">Membrane</keyword>
<keyword id="KW-1185">Reference proteome</keyword>
<keyword id="KW-0732">Signal</keyword>
<keyword id="KW-0812">Transmembrane</keyword>
<keyword id="KW-1133">Transmembrane helix</keyword>
<evidence type="ECO:0000255" key="1"/>
<evidence type="ECO:0000269" key="2">
    <source>
    </source>
</evidence>
<evidence type="ECO:0000305" key="3"/>
<sequence length="442" mass="48877">MRYLSFFFEFFFLFSFAFAFDFDVTSDDSINSALTTVTDGMLNYYQSTSHTFTAYWWMTGAGLNSMTDTYAATGNTTHLDMLISALVANKGDNNDYAPNSEKFDLGNDDQGIWGLSAMSAAEVNMTTGDSSASFTELAQAVFNEIMSRWDTSSCGGGVRWQIYSFNNGYSYKNSISNGILFQLAARLARYTNNDTYVDLAQKVWDWSTTVGFVDLDDYTVYDGASVTSNCSSITNEQWSYNVGVYLAGTAFLYNYTNGSSVWQTHMEGLMNKALDYYFTSDKIIYEPSCEPTESCNSDQTAFKGMLARFLGYTMQLAPYTVETILPYIQSSAEAAALACSGGSDGVTCGYMWYWNNGTWDDHYGLGEQISAVETFQALLAQQSATILTLDTGASSESNPDAGTDDGDTVTITPATKSDKGWAGFLTFAFSFVFLLFSIWLYF</sequence>
<proteinExistence type="inferred from homology"/>
<dbReference type="EC" id="3.2.1.101"/>
<dbReference type="EMBL" id="CU329671">
    <property type="protein sequence ID" value="CAB91182.2"/>
    <property type="molecule type" value="Genomic_DNA"/>
</dbReference>
<dbReference type="SMR" id="Q9P6I3"/>
<dbReference type="STRING" id="284812.Q9P6I3"/>
<dbReference type="CAZy" id="GH76">
    <property type="family name" value="Glycoside Hydrolase Family 76"/>
</dbReference>
<dbReference type="iPTMnet" id="Q9P6I3"/>
<dbReference type="PaxDb" id="4896-SPBC1198.07c.1"/>
<dbReference type="EnsemblFungi" id="SPBC1198.07c.1">
    <property type="protein sequence ID" value="SPBC1198.07c.1:pep"/>
    <property type="gene ID" value="SPBC1198.07c"/>
</dbReference>
<dbReference type="KEGG" id="spo:2539836"/>
<dbReference type="PomBase" id="SPBC1198.07c"/>
<dbReference type="VEuPathDB" id="FungiDB:SPBC1198.07c"/>
<dbReference type="eggNOG" id="ENOG502QSWP">
    <property type="taxonomic scope" value="Eukaryota"/>
</dbReference>
<dbReference type="HOGENOM" id="CLU_025694_1_2_1"/>
<dbReference type="InParanoid" id="Q9P6I3"/>
<dbReference type="OMA" id="WFWWLSG"/>
<dbReference type="PRO" id="PR:Q9P6I3"/>
<dbReference type="Proteomes" id="UP000002485">
    <property type="component" value="Chromosome II"/>
</dbReference>
<dbReference type="GO" id="GO:0005783">
    <property type="term" value="C:endoplasmic reticulum"/>
    <property type="evidence" value="ECO:0007005"/>
    <property type="project" value="PomBase"/>
</dbReference>
<dbReference type="GO" id="GO:0005789">
    <property type="term" value="C:endoplasmic reticulum membrane"/>
    <property type="evidence" value="ECO:0007669"/>
    <property type="project" value="UniProtKB-SubCell"/>
</dbReference>
<dbReference type="GO" id="GO:0009897">
    <property type="term" value="C:external side of plasma membrane"/>
    <property type="evidence" value="ECO:0000266"/>
    <property type="project" value="PomBase"/>
</dbReference>
<dbReference type="GO" id="GO:0008496">
    <property type="term" value="F:mannan endo-1,6-alpha-mannosidase activity"/>
    <property type="evidence" value="ECO:0000255"/>
    <property type="project" value="PomBase"/>
</dbReference>
<dbReference type="GO" id="GO:0016052">
    <property type="term" value="P:carbohydrate catabolic process"/>
    <property type="evidence" value="ECO:0007669"/>
    <property type="project" value="InterPro"/>
</dbReference>
<dbReference type="GO" id="GO:0009272">
    <property type="term" value="P:fungal-type cell wall biogenesis"/>
    <property type="evidence" value="ECO:0000318"/>
    <property type="project" value="GO_Central"/>
</dbReference>
<dbReference type="GO" id="GO:0000920">
    <property type="term" value="P:septum digestion after cytokinesis"/>
    <property type="evidence" value="ECO:0000315"/>
    <property type="project" value="PomBase"/>
</dbReference>
<dbReference type="FunFam" id="1.50.10.20:FF:000006">
    <property type="entry name" value="Mannan endo-1,6-alpha-mannosidase"/>
    <property type="match status" value="1"/>
</dbReference>
<dbReference type="Gene3D" id="1.50.10.20">
    <property type="match status" value="1"/>
</dbReference>
<dbReference type="InterPro" id="IPR008928">
    <property type="entry name" value="6-hairpin_glycosidase_sf"/>
</dbReference>
<dbReference type="InterPro" id="IPR005198">
    <property type="entry name" value="Glyco_hydro_76"/>
</dbReference>
<dbReference type="InterPro" id="IPR014480">
    <property type="entry name" value="Mannan-1_6-alpha_mannosidase"/>
</dbReference>
<dbReference type="PANTHER" id="PTHR12145:SF40">
    <property type="entry name" value="MANNAN ENDO-1,6-ALPHA-MANNOSIDASE C1198.07C-RELATED"/>
    <property type="match status" value="1"/>
</dbReference>
<dbReference type="PANTHER" id="PTHR12145">
    <property type="entry name" value="MANNAN ENDO-1,6-ALPHA-MANNOSIDASE DCW1"/>
    <property type="match status" value="1"/>
</dbReference>
<dbReference type="Pfam" id="PF03663">
    <property type="entry name" value="Glyco_hydro_76"/>
    <property type="match status" value="1"/>
</dbReference>
<dbReference type="PIRSF" id="PIRSF016302">
    <property type="entry name" value="Man_a_manosd"/>
    <property type="match status" value="1"/>
</dbReference>
<dbReference type="SUPFAM" id="SSF48208">
    <property type="entry name" value="Six-hairpin glycosidases"/>
    <property type="match status" value="1"/>
</dbReference>
<organism>
    <name type="scientific">Schizosaccharomyces pombe (strain 972 / ATCC 24843)</name>
    <name type="common">Fission yeast</name>
    <dbReference type="NCBI Taxonomy" id="284812"/>
    <lineage>
        <taxon>Eukaryota</taxon>
        <taxon>Fungi</taxon>
        <taxon>Dikarya</taxon>
        <taxon>Ascomycota</taxon>
        <taxon>Taphrinomycotina</taxon>
        <taxon>Schizosaccharomycetes</taxon>
        <taxon>Schizosaccharomycetales</taxon>
        <taxon>Schizosaccharomycetaceae</taxon>
        <taxon>Schizosaccharomyces</taxon>
    </lineage>
</organism>
<gene>
    <name type="ORF">SPBC1198.07c</name>
</gene>
<comment type="catalytic activity">
    <reaction>
        <text>Random hydrolysis of (1-&gt;6)-alpha-D-mannosidic linkages in unbranched (1-&gt;6)-mannans.</text>
        <dbReference type="EC" id="3.2.1.101"/>
    </reaction>
</comment>
<comment type="subcellular location">
    <subcellularLocation>
        <location evidence="2">Endoplasmic reticulum membrane</location>
        <topology evidence="2">Single-pass type I membrane protein</topology>
    </subcellularLocation>
</comment>
<comment type="similarity">
    <text evidence="3">Belongs to the glycosyl hydrolase 76 family.</text>
</comment>
<reference key="1">
    <citation type="journal article" date="2002" name="Nature">
        <title>The genome sequence of Schizosaccharomyces pombe.</title>
        <authorList>
            <person name="Wood V."/>
            <person name="Gwilliam R."/>
            <person name="Rajandream M.A."/>
            <person name="Lyne M.H."/>
            <person name="Lyne R."/>
            <person name="Stewart A."/>
            <person name="Sgouros J.G."/>
            <person name="Peat N."/>
            <person name="Hayles J."/>
            <person name="Baker S.G."/>
            <person name="Basham D."/>
            <person name="Bowman S."/>
            <person name="Brooks K."/>
            <person name="Brown D."/>
            <person name="Brown S."/>
            <person name="Chillingworth T."/>
            <person name="Churcher C.M."/>
            <person name="Collins M."/>
            <person name="Connor R."/>
            <person name="Cronin A."/>
            <person name="Davis P."/>
            <person name="Feltwell T."/>
            <person name="Fraser A."/>
            <person name="Gentles S."/>
            <person name="Goble A."/>
            <person name="Hamlin N."/>
            <person name="Harris D.E."/>
            <person name="Hidalgo J."/>
            <person name="Hodgson G."/>
            <person name="Holroyd S."/>
            <person name="Hornsby T."/>
            <person name="Howarth S."/>
            <person name="Huckle E.J."/>
            <person name="Hunt S."/>
            <person name="Jagels K."/>
            <person name="James K.D."/>
            <person name="Jones L."/>
            <person name="Jones M."/>
            <person name="Leather S."/>
            <person name="McDonald S."/>
            <person name="McLean J."/>
            <person name="Mooney P."/>
            <person name="Moule S."/>
            <person name="Mungall K.L."/>
            <person name="Murphy L.D."/>
            <person name="Niblett D."/>
            <person name="Odell C."/>
            <person name="Oliver K."/>
            <person name="O'Neil S."/>
            <person name="Pearson D."/>
            <person name="Quail M.A."/>
            <person name="Rabbinowitsch E."/>
            <person name="Rutherford K.M."/>
            <person name="Rutter S."/>
            <person name="Saunders D."/>
            <person name="Seeger K."/>
            <person name="Sharp S."/>
            <person name="Skelton J."/>
            <person name="Simmonds M.N."/>
            <person name="Squares R."/>
            <person name="Squares S."/>
            <person name="Stevens K."/>
            <person name="Taylor K."/>
            <person name="Taylor R.G."/>
            <person name="Tivey A."/>
            <person name="Walsh S.V."/>
            <person name="Warren T."/>
            <person name="Whitehead S."/>
            <person name="Woodward J.R."/>
            <person name="Volckaert G."/>
            <person name="Aert R."/>
            <person name="Robben J."/>
            <person name="Grymonprez B."/>
            <person name="Weltjens I."/>
            <person name="Vanstreels E."/>
            <person name="Rieger M."/>
            <person name="Schaefer M."/>
            <person name="Mueller-Auer S."/>
            <person name="Gabel C."/>
            <person name="Fuchs M."/>
            <person name="Duesterhoeft A."/>
            <person name="Fritzc C."/>
            <person name="Holzer E."/>
            <person name="Moestl D."/>
            <person name="Hilbert H."/>
            <person name="Borzym K."/>
            <person name="Langer I."/>
            <person name="Beck A."/>
            <person name="Lehrach H."/>
            <person name="Reinhardt R."/>
            <person name="Pohl T.M."/>
            <person name="Eger P."/>
            <person name="Zimmermann W."/>
            <person name="Wedler H."/>
            <person name="Wambutt R."/>
            <person name="Purnelle B."/>
            <person name="Goffeau A."/>
            <person name="Cadieu E."/>
            <person name="Dreano S."/>
            <person name="Gloux S."/>
            <person name="Lelaure V."/>
            <person name="Mottier S."/>
            <person name="Galibert F."/>
            <person name="Aves S.J."/>
            <person name="Xiang Z."/>
            <person name="Hunt C."/>
            <person name="Moore K."/>
            <person name="Hurst S.M."/>
            <person name="Lucas M."/>
            <person name="Rochet M."/>
            <person name="Gaillardin C."/>
            <person name="Tallada V.A."/>
            <person name="Garzon A."/>
            <person name="Thode G."/>
            <person name="Daga R.R."/>
            <person name="Cruzado L."/>
            <person name="Jimenez J."/>
            <person name="Sanchez M."/>
            <person name="del Rey F."/>
            <person name="Benito J."/>
            <person name="Dominguez A."/>
            <person name="Revuelta J.L."/>
            <person name="Moreno S."/>
            <person name="Armstrong J."/>
            <person name="Forsburg S.L."/>
            <person name="Cerutti L."/>
            <person name="Lowe T."/>
            <person name="McCombie W.R."/>
            <person name="Paulsen I."/>
            <person name="Potashkin J."/>
            <person name="Shpakovski G.V."/>
            <person name="Ussery D."/>
            <person name="Barrell B.G."/>
            <person name="Nurse P."/>
        </authorList>
    </citation>
    <scope>NUCLEOTIDE SEQUENCE [LARGE SCALE GENOMIC DNA]</scope>
    <source>
        <strain>972 / ATCC 24843</strain>
    </source>
</reference>
<reference key="2">
    <citation type="journal article" date="2011" name="Science">
        <title>Comparative functional genomics of the fission yeasts.</title>
        <authorList>
            <person name="Rhind N."/>
            <person name="Chen Z."/>
            <person name="Yassour M."/>
            <person name="Thompson D.A."/>
            <person name="Haas B.J."/>
            <person name="Habib N."/>
            <person name="Wapinski I."/>
            <person name="Roy S."/>
            <person name="Lin M.F."/>
            <person name="Heiman D.I."/>
            <person name="Young S.K."/>
            <person name="Furuya K."/>
            <person name="Guo Y."/>
            <person name="Pidoux A."/>
            <person name="Chen H.M."/>
            <person name="Robbertse B."/>
            <person name="Goldberg J.M."/>
            <person name="Aoki K."/>
            <person name="Bayne E.H."/>
            <person name="Berlin A.M."/>
            <person name="Desjardins C.A."/>
            <person name="Dobbs E."/>
            <person name="Dukaj L."/>
            <person name="Fan L."/>
            <person name="FitzGerald M.G."/>
            <person name="French C."/>
            <person name="Gujja S."/>
            <person name="Hansen K."/>
            <person name="Keifenheim D."/>
            <person name="Levin J.Z."/>
            <person name="Mosher R.A."/>
            <person name="Mueller C.A."/>
            <person name="Pfiffner J."/>
            <person name="Priest M."/>
            <person name="Russ C."/>
            <person name="Smialowska A."/>
            <person name="Swoboda P."/>
            <person name="Sykes S.M."/>
            <person name="Vaughn M."/>
            <person name="Vengrova S."/>
            <person name="Yoder R."/>
            <person name="Zeng Q."/>
            <person name="Allshire R."/>
            <person name="Baulcombe D."/>
            <person name="Birren B.W."/>
            <person name="Brown W."/>
            <person name="Ekwall K."/>
            <person name="Kellis M."/>
            <person name="Leatherwood J."/>
            <person name="Levin H."/>
            <person name="Margalit H."/>
            <person name="Martienssen R."/>
            <person name="Nieduszynski C.A."/>
            <person name="Spatafora J.W."/>
            <person name="Friedman N."/>
            <person name="Dalgaard J.Z."/>
            <person name="Baumann P."/>
            <person name="Niki H."/>
            <person name="Regev A."/>
            <person name="Nusbaum C."/>
        </authorList>
    </citation>
    <scope>REVISION OF GENE MODEL</scope>
</reference>
<reference key="3">
    <citation type="journal article" date="2006" name="Nat. Biotechnol.">
        <title>ORFeome cloning and global analysis of protein localization in the fission yeast Schizosaccharomyces pombe.</title>
        <authorList>
            <person name="Matsuyama A."/>
            <person name="Arai R."/>
            <person name="Yashiroda Y."/>
            <person name="Shirai A."/>
            <person name="Kamata A."/>
            <person name="Sekido S."/>
            <person name="Kobayashi Y."/>
            <person name="Hashimoto A."/>
            <person name="Hamamoto M."/>
            <person name="Hiraoka Y."/>
            <person name="Horinouchi S."/>
            <person name="Yoshida M."/>
        </authorList>
    </citation>
    <scope>SUBCELLULAR LOCATION [LARGE SCALE ANALYSIS]</scope>
</reference>
<accession>Q9P6I3</accession>
<protein>
    <recommendedName>
        <fullName>Putative mannan endo-1,6-alpha-mannosidase C1198.07c</fullName>
        <ecNumber>3.2.1.101</ecNumber>
    </recommendedName>
    <alternativeName>
        <fullName>Endo-alpha-1-&gt;6-D-mannanase C1198.07c</fullName>
    </alternativeName>
</protein>